<feature type="chain" id="PRO_0000337060" description="Tectonin beta-propeller repeat-containing protein 1">
    <location>
        <begin position="1"/>
        <end position="1165"/>
    </location>
</feature>
<feature type="repeat" description="TECPR 1">
    <location>
        <begin position="209"/>
        <end position="240"/>
    </location>
</feature>
<feature type="repeat" description="TECPR 2">
    <location>
        <begin position="254"/>
        <end position="285"/>
    </location>
</feature>
<feature type="repeat" description="TECPR 3">
    <location>
        <begin position="301"/>
        <end position="332"/>
    </location>
</feature>
<feature type="repeat" description="TECPR 4">
    <location>
        <begin position="344"/>
        <end position="376"/>
    </location>
</feature>
<feature type="domain" description="PH">
    <location>
        <begin position="611"/>
        <end position="717"/>
    </location>
</feature>
<feature type="repeat" description="TECPR 5">
    <location>
        <begin position="729"/>
        <end position="756"/>
    </location>
</feature>
<feature type="repeat" description="TECPR 6">
    <location>
        <begin position="953"/>
        <end position="984"/>
    </location>
</feature>
<feature type="repeat" description="TECPR 7">
    <location>
        <begin position="998"/>
        <end position="1029"/>
    </location>
</feature>
<feature type="repeat" description="TECPR 8">
    <location>
        <begin position="1044"/>
        <end position="1075"/>
    </location>
</feature>
<feature type="repeat" description="TECPR 9">
    <location>
        <begin position="1087"/>
        <end position="1127"/>
    </location>
</feature>
<feature type="region of interest" description="Disordered" evidence="2">
    <location>
        <begin position="404"/>
        <end position="486"/>
    </location>
</feature>
<feature type="region of interest" description="Disordered" evidence="2">
    <location>
        <begin position="1140"/>
        <end position="1165"/>
    </location>
</feature>
<feature type="compositionally biased region" description="Low complexity" evidence="2">
    <location>
        <begin position="1143"/>
        <end position="1153"/>
    </location>
</feature>
<feature type="modified residue" description="Phosphoserine" evidence="1">
    <location>
        <position position="386"/>
    </location>
</feature>
<feature type="modified residue" description="Phosphoserine" evidence="1">
    <location>
        <position position="388"/>
    </location>
</feature>
<feature type="modified residue" description="Phosphoserine" evidence="1">
    <location>
        <position position="391"/>
    </location>
</feature>
<feature type="modified residue" description="Phosphoserine" evidence="1">
    <location>
        <position position="412"/>
    </location>
</feature>
<feature type="modified residue" description="Phosphoserine" evidence="1">
    <location>
        <position position="417"/>
    </location>
</feature>
<feature type="modified residue" description="Phosphoserine" evidence="8">
    <location>
        <position position="938"/>
    </location>
</feature>
<feature type="modified residue" description="Phosphoserine" evidence="8">
    <location>
        <position position="949"/>
    </location>
</feature>
<feature type="splice variant" id="VSP_042969" description="In isoform 3." evidence="5">
    <location>
        <begin position="1"/>
        <end position="79"/>
    </location>
</feature>
<feature type="splice variant" id="VSP_042970" description="In isoform 3." evidence="5">
    <original>K</original>
    <variation>KVLCPCLASQ</variation>
    <location>
        <position position="219"/>
    </location>
</feature>
<feature type="splice variant" id="VSP_042971" description="In isoform 4." evidence="7">
    <original>Q</original>
    <variation>QA</variation>
    <location>
        <position position="556"/>
    </location>
</feature>
<feature type="splice variant" id="VSP_033861" description="In isoform 2." evidence="6">
    <original>A</original>
    <variation>AG</variation>
    <location>
        <position position="557"/>
    </location>
</feature>
<feature type="splice variant" id="VSP_042972" description="In isoform 4." evidence="7">
    <original>T</original>
    <variation>TS</variation>
    <location>
        <position position="836"/>
    </location>
</feature>
<feature type="splice variant" id="VSP_042973" description="In isoform 3." evidence="5">
    <original>RGLPTDRYMWSDASGLQECTKAGTKPPSLQWAWVSDWFVDFSVPGGTDQEGWQYASDFPASYHGSKTMKDFVRRRCWARKCKLVTSGPWLEVPPIALRDVSIIPESPGAEGSGHSIALWAVSDKGDVLCRLGVSELNPAGSSWLHVGTDQPFASISIGACYQVWAVARDGSAFYRGSVYPSQPAGDCWYHIPSPPRQRLKQVSAGQTSVYALDENGNLWYRQGITPSYPQGSSWEHVSNNVCRVSVGPLDQVWVIANKVQGSHSLSRGTVCHRTGVQPHEPKGHGWDYGIGGGWDHISVRANATRAPRSSSQEQEPSAPPEAHGPVCC</original>
    <variation>SRDRISPCW</variation>
    <location>
        <begin position="838"/>
        <end position="1165"/>
    </location>
</feature>
<feature type="sequence variant" id="VAR_060190" description="In dbSNP:rs35623371.">
    <original>S</original>
    <variation>Y</variation>
    <location>
        <position position="733"/>
    </location>
</feature>
<feature type="sequence variant" id="VAR_062238" description="In dbSNP:rs11762014.">
    <original>P</original>
    <variation>L</variation>
    <location>
        <position position="944"/>
    </location>
</feature>
<feature type="sequence conflict" description="In Ref. 1; BAF85685." evidence="7" ref="1">
    <original>W</original>
    <variation>R</variation>
    <location>
        <position position="116"/>
    </location>
</feature>
<feature type="sequence conflict" description="In Ref. 1; BAG51853." evidence="7" ref="1">
    <original>D</original>
    <variation>Y</variation>
    <location>
        <position position="151"/>
    </location>
</feature>
<feature type="sequence conflict" description="In Ref. 1; BAF85685." evidence="7" ref="1">
    <original>A</original>
    <variation>T</variation>
    <location>
        <position position="464"/>
    </location>
</feature>
<feature type="sequence conflict" description="In Ref. 7; CAB55961." evidence="7" ref="7">
    <original>S</original>
    <variation>T</variation>
    <location>
        <position position="746"/>
    </location>
</feature>
<feature type="sequence conflict" description="In Ref. 1; BAF85685." evidence="7" ref="1">
    <original>I</original>
    <variation>T</variation>
    <location>
        <position position="953"/>
    </location>
</feature>
<feature type="sequence conflict" description="In Ref. 7; CAB55961." evidence="7" ref="7">
    <original>P</original>
    <variation>L</variation>
    <location>
        <position position="988"/>
    </location>
</feature>
<feature type="helix" evidence="9">
    <location>
        <begin position="577"/>
        <end position="594"/>
    </location>
</feature>
<feature type="turn" evidence="9">
    <location>
        <begin position="595"/>
        <end position="599"/>
    </location>
</feature>
<feature type="strand" evidence="9">
    <location>
        <begin position="600"/>
        <end position="603"/>
    </location>
</feature>
<comment type="function">
    <text evidence="3 4">Tethering factor involved in autophagy. Involved in autophagosome maturation by promoting the autophagosome fusion with lysosomes: acts by associating with both the ATG5-ATG12 conjugate and phosphatidylinositol-3-phosphate (PtdIns(3)P) present at the surface of autophagosomes. Also involved in selective autophagy against bacterial pathogens, by being required for phagophore/preautophagosomal structure biogenesis and maturation.</text>
</comment>
<comment type="subunit">
    <text evidence="3 4">Interacts with ATG5; the interaction is direct. Interacts with WIPI2. Interacts with the ATG5-ATG12 conjugate, the interaction is however mutually exclusive with ATG16, since it does not interact with ATG12-ATG5-ATG16 complex.</text>
</comment>
<comment type="interaction">
    <interactant intactId="EBI-2946676">
        <id>Q7Z6L1</id>
    </interactant>
    <interactant intactId="EBI-988094">
        <id>Q9NT62</id>
        <label>ATG3</label>
    </interactant>
    <organismsDiffer>false</organismsDiffer>
    <experiments>3</experiments>
</comment>
<comment type="interaction">
    <interactant intactId="EBI-2946676">
        <id>Q7Z6L1</id>
    </interactant>
    <interactant intactId="EBI-1047414">
        <id>Q9H1Y0</id>
        <label>ATG5</label>
    </interactant>
    <organismsDiffer>false</organismsDiffer>
    <experiments>12</experiments>
</comment>
<comment type="subcellular location">
    <subcellularLocation>
        <location>Cytoplasmic vesicle</location>
        <location>Autophagosome membrane</location>
    </subcellularLocation>
    <subcellularLocation>
        <location>Lysosome membrane</location>
    </subcellularLocation>
    <text>Localizes to Lysosome membranes, and binds PtdIns(3)P at the surface of autophagosome. Localizes to autolysosomes, a vesicle formed by the fusion between autophagosomes and lysosomes.</text>
</comment>
<comment type="alternative products">
    <event type="alternative splicing"/>
    <isoform>
        <id>Q7Z6L1-1</id>
        <name>1</name>
        <sequence type="displayed"/>
    </isoform>
    <isoform>
        <id>Q7Z6L1-2</id>
        <name>2</name>
        <sequence type="described" ref="VSP_033861"/>
    </isoform>
    <isoform>
        <id>Q7Z6L1-3</id>
        <name>3</name>
        <sequence type="described" ref="VSP_042969 VSP_042970 VSP_042973"/>
    </isoform>
    <isoform>
        <id>Q7Z6L1-4</id>
        <name>4</name>
        <sequence type="described" ref="VSP_042971 VSP_042972"/>
    </isoform>
</comment>
<comment type="domain">
    <text evidence="4">The PH domain mediates the binding to phosphatidylinositol-3-phosphate (PtdIns(3)P). While full-length protein is unable to bind PtdIns(3)P in vitro, it is assumed that the binding to the ATG5-ATG12 conjugate exposes the PH domain, allowing the association with PtdIns(3)P (PubMed:22342342).</text>
</comment>
<comment type="similarity">
    <text evidence="7">Belongs to the TECPR1 family.</text>
</comment>
<accession>Q7Z6L1</accession>
<accession>A8KAD1</accession>
<accession>B3KPZ1</accession>
<accession>C9J024</accession>
<accession>F5GX57</accession>
<accession>Q96EB0</accession>
<accession>Q9P2I9</accession>
<accession>Q9UFR6</accession>
<keyword id="KW-0002">3D-structure</keyword>
<keyword id="KW-0025">Alternative splicing</keyword>
<keyword id="KW-0072">Autophagy</keyword>
<keyword id="KW-0968">Cytoplasmic vesicle</keyword>
<keyword id="KW-0446">Lipid-binding</keyword>
<keyword id="KW-0458">Lysosome</keyword>
<keyword id="KW-0472">Membrane</keyword>
<keyword id="KW-0597">Phosphoprotein</keyword>
<keyword id="KW-1267">Proteomics identification</keyword>
<keyword id="KW-1185">Reference proteome</keyword>
<keyword id="KW-0677">Repeat</keyword>
<dbReference type="EMBL" id="AK057048">
    <property type="protein sequence ID" value="BAG51853.1"/>
    <property type="molecule type" value="mRNA"/>
</dbReference>
<dbReference type="EMBL" id="AK292996">
    <property type="protein sequence ID" value="BAF85685.1"/>
    <property type="molecule type" value="mRNA"/>
</dbReference>
<dbReference type="EMBL" id="AC091654">
    <property type="status" value="NOT_ANNOTATED_CDS"/>
    <property type="molecule type" value="Genomic_DNA"/>
</dbReference>
<dbReference type="EMBL" id="CH236956">
    <property type="protein sequence ID" value="EAL23891.1"/>
    <property type="molecule type" value="Genomic_DNA"/>
</dbReference>
<dbReference type="EMBL" id="CH471091">
    <property type="protein sequence ID" value="EAW76717.1"/>
    <property type="molecule type" value="Genomic_DNA"/>
</dbReference>
<dbReference type="EMBL" id="BC012529">
    <property type="protein sequence ID" value="AAH12529.2"/>
    <property type="molecule type" value="mRNA"/>
</dbReference>
<dbReference type="EMBL" id="BC053591">
    <property type="protein sequence ID" value="AAH53591.1"/>
    <property type="molecule type" value="mRNA"/>
</dbReference>
<dbReference type="EMBL" id="AB037779">
    <property type="protein sequence ID" value="BAA92596.1"/>
    <property type="molecule type" value="mRNA"/>
</dbReference>
<dbReference type="EMBL" id="AL117495">
    <property type="protein sequence ID" value="CAB55961.2"/>
    <property type="molecule type" value="mRNA"/>
</dbReference>
<dbReference type="CCDS" id="CCDS47648.1">
    <molecule id="Q7Z6L1-1"/>
</dbReference>
<dbReference type="PIR" id="T17271">
    <property type="entry name" value="T17271"/>
</dbReference>
<dbReference type="RefSeq" id="NP_056210.1">
    <molecule id="Q7Z6L1-1"/>
    <property type="nucleotide sequence ID" value="NM_015395.3"/>
</dbReference>
<dbReference type="RefSeq" id="XP_005250310.1">
    <molecule id="Q7Z6L1-1"/>
    <property type="nucleotide sequence ID" value="XM_005250253.5"/>
</dbReference>
<dbReference type="RefSeq" id="XP_054213740.1">
    <molecule id="Q7Z6L1-1"/>
    <property type="nucleotide sequence ID" value="XM_054357765.1"/>
</dbReference>
<dbReference type="PDB" id="4TQ1">
    <property type="method" value="X-ray"/>
    <property type="resolution" value="1.80 A"/>
    <property type="chains" value="B=573-610"/>
</dbReference>
<dbReference type="PDB" id="8P5P">
    <property type="method" value="X-ray"/>
    <property type="resolution" value="1.90 A"/>
    <property type="chains" value="A/B/C=60-173"/>
</dbReference>
<dbReference type="PDBsum" id="4TQ1"/>
<dbReference type="PDBsum" id="8P5P"/>
<dbReference type="SMR" id="Q7Z6L1"/>
<dbReference type="BioGRID" id="117375">
    <property type="interactions" value="14"/>
</dbReference>
<dbReference type="ComplexPortal" id="CPX-358">
    <property type="entry name" value="ATG5-ATG12-TECPR1 complex"/>
</dbReference>
<dbReference type="FunCoup" id="Q7Z6L1">
    <property type="interactions" value="1265"/>
</dbReference>
<dbReference type="IntAct" id="Q7Z6L1">
    <property type="interactions" value="16"/>
</dbReference>
<dbReference type="STRING" id="9606.ENSP00000404923"/>
<dbReference type="GlyCosmos" id="Q7Z6L1">
    <property type="glycosylation" value="1 site, 1 glycan"/>
</dbReference>
<dbReference type="GlyGen" id="Q7Z6L1">
    <property type="glycosylation" value="3 sites, 1 O-linked glycan (1 site)"/>
</dbReference>
<dbReference type="iPTMnet" id="Q7Z6L1"/>
<dbReference type="PhosphoSitePlus" id="Q7Z6L1"/>
<dbReference type="SwissPalm" id="Q7Z6L1"/>
<dbReference type="BioMuta" id="TECPR1"/>
<dbReference type="DMDM" id="74738829"/>
<dbReference type="jPOST" id="Q7Z6L1"/>
<dbReference type="MassIVE" id="Q7Z6L1"/>
<dbReference type="PaxDb" id="9606-ENSP00000404923"/>
<dbReference type="PeptideAtlas" id="Q7Z6L1"/>
<dbReference type="ProteomicsDB" id="69439">
    <molecule id="Q7Z6L1-1"/>
</dbReference>
<dbReference type="ProteomicsDB" id="69440">
    <molecule id="Q7Z6L1-2"/>
</dbReference>
<dbReference type="ProteomicsDB" id="69441">
    <molecule id="Q7Z6L1-3"/>
</dbReference>
<dbReference type="ProteomicsDB" id="69442">
    <molecule id="Q7Z6L1-4"/>
</dbReference>
<dbReference type="Pumba" id="Q7Z6L1"/>
<dbReference type="Antibodypedia" id="8742">
    <property type="antibodies" value="123 antibodies from 21 providers"/>
</dbReference>
<dbReference type="DNASU" id="25851"/>
<dbReference type="Ensembl" id="ENST00000447648.7">
    <molecule id="Q7Z6L1-1"/>
    <property type="protein sequence ID" value="ENSP00000404923.2"/>
    <property type="gene ID" value="ENSG00000205356.10"/>
</dbReference>
<dbReference type="GeneID" id="25851"/>
<dbReference type="KEGG" id="hsa:25851"/>
<dbReference type="MANE-Select" id="ENST00000447648.7">
    <property type="protein sequence ID" value="ENSP00000404923.2"/>
    <property type="RefSeq nucleotide sequence ID" value="NM_015395.3"/>
    <property type="RefSeq protein sequence ID" value="NP_056210.1"/>
</dbReference>
<dbReference type="UCSC" id="uc003upg.5">
    <molecule id="Q7Z6L1-1"/>
    <property type="organism name" value="human"/>
</dbReference>
<dbReference type="AGR" id="HGNC:22214"/>
<dbReference type="CTD" id="25851"/>
<dbReference type="DisGeNET" id="25851"/>
<dbReference type="GeneCards" id="TECPR1"/>
<dbReference type="HGNC" id="HGNC:22214">
    <property type="gene designation" value="TECPR1"/>
</dbReference>
<dbReference type="HPA" id="ENSG00000205356">
    <property type="expression patterns" value="Tissue enriched (pancreas)"/>
</dbReference>
<dbReference type="MIM" id="614781">
    <property type="type" value="gene"/>
</dbReference>
<dbReference type="neXtProt" id="NX_Q7Z6L1"/>
<dbReference type="OpenTargets" id="ENSG00000205356"/>
<dbReference type="PharmGKB" id="PA164726436"/>
<dbReference type="VEuPathDB" id="HostDB:ENSG00000205356"/>
<dbReference type="eggNOG" id="KOG3669">
    <property type="taxonomic scope" value="Eukaryota"/>
</dbReference>
<dbReference type="GeneTree" id="ENSGT00510000047886"/>
<dbReference type="HOGENOM" id="CLU_008303_0_0_1"/>
<dbReference type="InParanoid" id="Q7Z6L1"/>
<dbReference type="OMA" id="CPMQISR"/>
<dbReference type="OrthoDB" id="72441at2759"/>
<dbReference type="PAN-GO" id="Q7Z6L1">
    <property type="GO annotations" value="4 GO annotations based on evolutionary models"/>
</dbReference>
<dbReference type="PhylomeDB" id="Q7Z6L1"/>
<dbReference type="TreeFam" id="TF323648"/>
<dbReference type="PathwayCommons" id="Q7Z6L1"/>
<dbReference type="SignaLink" id="Q7Z6L1"/>
<dbReference type="BioGRID-ORCS" id="25851">
    <property type="hits" value="13 hits in 1154 CRISPR screens"/>
</dbReference>
<dbReference type="ChiTaRS" id="TECPR1">
    <property type="organism name" value="human"/>
</dbReference>
<dbReference type="GenomeRNAi" id="25851"/>
<dbReference type="Pharos" id="Q7Z6L1">
    <property type="development level" value="Tbio"/>
</dbReference>
<dbReference type="PRO" id="PR:Q7Z6L1"/>
<dbReference type="Proteomes" id="UP000005640">
    <property type="component" value="Chromosome 7"/>
</dbReference>
<dbReference type="RNAct" id="Q7Z6L1">
    <property type="molecule type" value="protein"/>
</dbReference>
<dbReference type="Bgee" id="ENSG00000205356">
    <property type="expression patterns" value="Expressed in parotid gland and 181 other cell types or tissues"/>
</dbReference>
<dbReference type="ExpressionAtlas" id="Q7Z6L1">
    <property type="expression patterns" value="baseline and differential"/>
</dbReference>
<dbReference type="GO" id="GO:0000421">
    <property type="term" value="C:autophagosome membrane"/>
    <property type="evidence" value="ECO:0000314"/>
    <property type="project" value="UniProtKB"/>
</dbReference>
<dbReference type="GO" id="GO:0031410">
    <property type="term" value="C:cytoplasmic vesicle"/>
    <property type="evidence" value="ECO:0007669"/>
    <property type="project" value="UniProtKB-KW"/>
</dbReference>
<dbReference type="GO" id="GO:0043231">
    <property type="term" value="C:intracellular membrane-bounded organelle"/>
    <property type="evidence" value="ECO:0000314"/>
    <property type="project" value="HPA"/>
</dbReference>
<dbReference type="GO" id="GO:0005765">
    <property type="term" value="C:lysosomal membrane"/>
    <property type="evidence" value="ECO:0000314"/>
    <property type="project" value="UniProtKB"/>
</dbReference>
<dbReference type="GO" id="GO:0005654">
    <property type="term" value="C:nucleoplasm"/>
    <property type="evidence" value="ECO:0000314"/>
    <property type="project" value="HPA"/>
</dbReference>
<dbReference type="GO" id="GO:0032991">
    <property type="term" value="C:protein-containing complex"/>
    <property type="evidence" value="ECO:0000303"/>
    <property type="project" value="ComplexPortal"/>
</dbReference>
<dbReference type="GO" id="GO:0032266">
    <property type="term" value="F:phosphatidylinositol-3-phosphate binding"/>
    <property type="evidence" value="ECO:0000314"/>
    <property type="project" value="UniProtKB"/>
</dbReference>
<dbReference type="GO" id="GO:0097352">
    <property type="term" value="P:autophagosome maturation"/>
    <property type="evidence" value="ECO:0000315"/>
    <property type="project" value="UniProtKB"/>
</dbReference>
<dbReference type="GO" id="GO:0006914">
    <property type="term" value="P:autophagy"/>
    <property type="evidence" value="ECO:0000314"/>
    <property type="project" value="UniProtKB"/>
</dbReference>
<dbReference type="GO" id="GO:0016236">
    <property type="term" value="P:macroautophagy"/>
    <property type="evidence" value="ECO:0000315"/>
    <property type="project" value="ComplexPortal"/>
</dbReference>
<dbReference type="GO" id="GO:1901096">
    <property type="term" value="P:regulation of autophagosome maturation"/>
    <property type="evidence" value="ECO:0000315"/>
    <property type="project" value="ComplexPortal"/>
</dbReference>
<dbReference type="CDD" id="cd13300">
    <property type="entry name" value="PH1_TECPR1"/>
    <property type="match status" value="1"/>
</dbReference>
<dbReference type="FunFam" id="2.30.29.30:FF:000690">
    <property type="entry name" value="Tectonin beta-propeller repeat-containing protein 1"/>
    <property type="match status" value="1"/>
</dbReference>
<dbReference type="Gene3D" id="2.30.29.30">
    <property type="entry name" value="Pleckstrin-homology domain (PH domain)/Phosphotyrosine-binding domain (PTB)"/>
    <property type="match status" value="1"/>
</dbReference>
<dbReference type="InterPro" id="IPR006624">
    <property type="entry name" value="Beta-propeller_rpt_TECPR"/>
</dbReference>
<dbReference type="InterPro" id="IPR006614">
    <property type="entry name" value="Peroxin/Ferlin"/>
</dbReference>
<dbReference type="InterPro" id="IPR011993">
    <property type="entry name" value="PH-like_dom_sf"/>
</dbReference>
<dbReference type="InterPro" id="IPR010482">
    <property type="entry name" value="TECPR1-like_DysF"/>
</dbReference>
<dbReference type="InterPro" id="IPR051513">
    <property type="entry name" value="Tectonin_beta-propeller"/>
</dbReference>
<dbReference type="PANTHER" id="PTHR23250">
    <property type="entry name" value="DYSFERLIN-RELATED"/>
    <property type="match status" value="1"/>
</dbReference>
<dbReference type="PANTHER" id="PTHR23250:SF1">
    <property type="entry name" value="TECTONIN BETA-PROPELLER REPEAT-CONTAINING PROTEIN 1"/>
    <property type="match status" value="1"/>
</dbReference>
<dbReference type="Pfam" id="PF06462">
    <property type="entry name" value="Hyd_WA"/>
    <property type="match status" value="4"/>
</dbReference>
<dbReference type="Pfam" id="PF06398">
    <property type="entry name" value="Pex24p"/>
    <property type="match status" value="2"/>
</dbReference>
<dbReference type="Pfam" id="PF19193">
    <property type="entry name" value="Tectonin"/>
    <property type="match status" value="1"/>
</dbReference>
<dbReference type="SMART" id="SM00694">
    <property type="entry name" value="DysFC"/>
    <property type="match status" value="2"/>
</dbReference>
<dbReference type="SMART" id="SM00693">
    <property type="entry name" value="DysFN"/>
    <property type="match status" value="2"/>
</dbReference>
<dbReference type="SMART" id="SM00706">
    <property type="entry name" value="TECPR"/>
    <property type="match status" value="11"/>
</dbReference>
<dbReference type="SUPFAM" id="SSF50729">
    <property type="entry name" value="PH domain-like"/>
    <property type="match status" value="1"/>
</dbReference>
<gene>
    <name type="primary">TECPR1</name>
    <name type="synonym">KIAA1358</name>
</gene>
<protein>
    <recommendedName>
        <fullName>Tectonin beta-propeller repeat-containing protein 1</fullName>
    </recommendedName>
</protein>
<proteinExistence type="evidence at protein level"/>
<reference key="1">
    <citation type="journal article" date="2004" name="Nat. Genet.">
        <title>Complete sequencing and characterization of 21,243 full-length human cDNAs.</title>
        <authorList>
            <person name="Ota T."/>
            <person name="Suzuki Y."/>
            <person name="Nishikawa T."/>
            <person name="Otsuki T."/>
            <person name="Sugiyama T."/>
            <person name="Irie R."/>
            <person name="Wakamatsu A."/>
            <person name="Hayashi K."/>
            <person name="Sato H."/>
            <person name="Nagai K."/>
            <person name="Kimura K."/>
            <person name="Makita H."/>
            <person name="Sekine M."/>
            <person name="Obayashi M."/>
            <person name="Nishi T."/>
            <person name="Shibahara T."/>
            <person name="Tanaka T."/>
            <person name="Ishii S."/>
            <person name="Yamamoto J."/>
            <person name="Saito K."/>
            <person name="Kawai Y."/>
            <person name="Isono Y."/>
            <person name="Nakamura Y."/>
            <person name="Nagahari K."/>
            <person name="Murakami K."/>
            <person name="Yasuda T."/>
            <person name="Iwayanagi T."/>
            <person name="Wagatsuma M."/>
            <person name="Shiratori A."/>
            <person name="Sudo H."/>
            <person name="Hosoiri T."/>
            <person name="Kaku Y."/>
            <person name="Kodaira H."/>
            <person name="Kondo H."/>
            <person name="Sugawara M."/>
            <person name="Takahashi M."/>
            <person name="Kanda K."/>
            <person name="Yokoi T."/>
            <person name="Furuya T."/>
            <person name="Kikkawa E."/>
            <person name="Omura Y."/>
            <person name="Abe K."/>
            <person name="Kamihara K."/>
            <person name="Katsuta N."/>
            <person name="Sato K."/>
            <person name="Tanikawa M."/>
            <person name="Yamazaki M."/>
            <person name="Ninomiya K."/>
            <person name="Ishibashi T."/>
            <person name="Yamashita H."/>
            <person name="Murakawa K."/>
            <person name="Fujimori K."/>
            <person name="Tanai H."/>
            <person name="Kimata M."/>
            <person name="Watanabe M."/>
            <person name="Hiraoka S."/>
            <person name="Chiba Y."/>
            <person name="Ishida S."/>
            <person name="Ono Y."/>
            <person name="Takiguchi S."/>
            <person name="Watanabe S."/>
            <person name="Yosida M."/>
            <person name="Hotuta T."/>
            <person name="Kusano J."/>
            <person name="Kanehori K."/>
            <person name="Takahashi-Fujii A."/>
            <person name="Hara H."/>
            <person name="Tanase T.-O."/>
            <person name="Nomura Y."/>
            <person name="Togiya S."/>
            <person name="Komai F."/>
            <person name="Hara R."/>
            <person name="Takeuchi K."/>
            <person name="Arita M."/>
            <person name="Imose N."/>
            <person name="Musashino K."/>
            <person name="Yuuki H."/>
            <person name="Oshima A."/>
            <person name="Sasaki N."/>
            <person name="Aotsuka S."/>
            <person name="Yoshikawa Y."/>
            <person name="Matsunawa H."/>
            <person name="Ichihara T."/>
            <person name="Shiohata N."/>
            <person name="Sano S."/>
            <person name="Moriya S."/>
            <person name="Momiyama H."/>
            <person name="Satoh N."/>
            <person name="Takami S."/>
            <person name="Terashima Y."/>
            <person name="Suzuki O."/>
            <person name="Nakagawa S."/>
            <person name="Senoh A."/>
            <person name="Mizoguchi H."/>
            <person name="Goto Y."/>
            <person name="Shimizu F."/>
            <person name="Wakebe H."/>
            <person name="Hishigaki H."/>
            <person name="Watanabe T."/>
            <person name="Sugiyama A."/>
            <person name="Takemoto M."/>
            <person name="Kawakami B."/>
            <person name="Yamazaki M."/>
            <person name="Watanabe K."/>
            <person name="Kumagai A."/>
            <person name="Itakura S."/>
            <person name="Fukuzumi Y."/>
            <person name="Fujimori Y."/>
            <person name="Komiyama M."/>
            <person name="Tashiro H."/>
            <person name="Tanigami A."/>
            <person name="Fujiwara T."/>
            <person name="Ono T."/>
            <person name="Yamada K."/>
            <person name="Fujii Y."/>
            <person name="Ozaki K."/>
            <person name="Hirao M."/>
            <person name="Ohmori Y."/>
            <person name="Kawabata A."/>
            <person name="Hikiji T."/>
            <person name="Kobatake N."/>
            <person name="Inagaki H."/>
            <person name="Ikema Y."/>
            <person name="Okamoto S."/>
            <person name="Okitani R."/>
            <person name="Kawakami T."/>
            <person name="Noguchi S."/>
            <person name="Itoh T."/>
            <person name="Shigeta K."/>
            <person name="Senba T."/>
            <person name="Matsumura K."/>
            <person name="Nakajima Y."/>
            <person name="Mizuno T."/>
            <person name="Morinaga M."/>
            <person name="Sasaki M."/>
            <person name="Togashi T."/>
            <person name="Oyama M."/>
            <person name="Hata H."/>
            <person name="Watanabe M."/>
            <person name="Komatsu T."/>
            <person name="Mizushima-Sugano J."/>
            <person name="Satoh T."/>
            <person name="Shirai Y."/>
            <person name="Takahashi Y."/>
            <person name="Nakagawa K."/>
            <person name="Okumura K."/>
            <person name="Nagase T."/>
            <person name="Nomura N."/>
            <person name="Kikuchi H."/>
            <person name="Masuho Y."/>
            <person name="Yamashita R."/>
            <person name="Nakai K."/>
            <person name="Yada T."/>
            <person name="Nakamura Y."/>
            <person name="Ohara O."/>
            <person name="Isogai T."/>
            <person name="Sugano S."/>
        </authorList>
    </citation>
    <scope>NUCLEOTIDE SEQUENCE [LARGE SCALE MRNA] (ISOFORMS 1 AND 3)</scope>
    <source>
        <tissue>Trachea</tissue>
    </source>
</reference>
<reference key="2">
    <citation type="journal article" date="2003" name="Science">
        <title>Human chromosome 7: DNA sequence and biology.</title>
        <authorList>
            <person name="Scherer S.W."/>
            <person name="Cheung J."/>
            <person name="MacDonald J.R."/>
            <person name="Osborne L.R."/>
            <person name="Nakabayashi K."/>
            <person name="Herbrick J.-A."/>
            <person name="Carson A.R."/>
            <person name="Parker-Katiraee L."/>
            <person name="Skaug J."/>
            <person name="Khaja R."/>
            <person name="Zhang J."/>
            <person name="Hudek A.K."/>
            <person name="Li M."/>
            <person name="Haddad M."/>
            <person name="Duggan G.E."/>
            <person name="Fernandez B.A."/>
            <person name="Kanematsu E."/>
            <person name="Gentles S."/>
            <person name="Christopoulos C.C."/>
            <person name="Choufani S."/>
            <person name="Kwasnicka D."/>
            <person name="Zheng X.H."/>
            <person name="Lai Z."/>
            <person name="Nusskern D.R."/>
            <person name="Zhang Q."/>
            <person name="Gu Z."/>
            <person name="Lu F."/>
            <person name="Zeesman S."/>
            <person name="Nowaczyk M.J."/>
            <person name="Teshima I."/>
            <person name="Chitayat D."/>
            <person name="Shuman C."/>
            <person name="Weksberg R."/>
            <person name="Zackai E.H."/>
            <person name="Grebe T.A."/>
            <person name="Cox S.R."/>
            <person name="Kirkpatrick S.J."/>
            <person name="Rahman N."/>
            <person name="Friedman J.M."/>
            <person name="Heng H.H.Q."/>
            <person name="Pelicci P.G."/>
            <person name="Lo-Coco F."/>
            <person name="Belloni E."/>
            <person name="Shaffer L.G."/>
            <person name="Pober B."/>
            <person name="Morton C.C."/>
            <person name="Gusella J.F."/>
            <person name="Bruns G.A.P."/>
            <person name="Korf B.R."/>
            <person name="Quade B.J."/>
            <person name="Ligon A.H."/>
            <person name="Ferguson H."/>
            <person name="Higgins A.W."/>
            <person name="Leach N.T."/>
            <person name="Herrick S.R."/>
            <person name="Lemyre E."/>
            <person name="Farra C.G."/>
            <person name="Kim H.-G."/>
            <person name="Summers A.M."/>
            <person name="Gripp K.W."/>
            <person name="Roberts W."/>
            <person name="Szatmari P."/>
            <person name="Winsor E.J.T."/>
            <person name="Grzeschik K.-H."/>
            <person name="Teebi A."/>
            <person name="Minassian B.A."/>
            <person name="Kere J."/>
            <person name="Armengol L."/>
            <person name="Pujana M.A."/>
            <person name="Estivill X."/>
            <person name="Wilson M.D."/>
            <person name="Koop B.F."/>
            <person name="Tosi S."/>
            <person name="Moore G.E."/>
            <person name="Boright A.P."/>
            <person name="Zlotorynski E."/>
            <person name="Kerem B."/>
            <person name="Kroisel P.M."/>
            <person name="Petek E."/>
            <person name="Oscier D.G."/>
            <person name="Mould S.J."/>
            <person name="Doehner H."/>
            <person name="Doehner K."/>
            <person name="Rommens J.M."/>
            <person name="Vincent J.B."/>
            <person name="Venter J.C."/>
            <person name="Li P.W."/>
            <person name="Mural R.J."/>
            <person name="Adams M.D."/>
            <person name="Tsui L.-C."/>
        </authorList>
    </citation>
    <scope>NUCLEOTIDE SEQUENCE [LARGE SCALE GENOMIC DNA]</scope>
</reference>
<reference key="3">
    <citation type="journal article" date="2003" name="Nature">
        <title>The DNA sequence of human chromosome 7.</title>
        <authorList>
            <person name="Hillier L.W."/>
            <person name="Fulton R.S."/>
            <person name="Fulton L.A."/>
            <person name="Graves T.A."/>
            <person name="Pepin K.H."/>
            <person name="Wagner-McPherson C."/>
            <person name="Layman D."/>
            <person name="Maas J."/>
            <person name="Jaeger S."/>
            <person name="Walker R."/>
            <person name="Wylie K."/>
            <person name="Sekhon M."/>
            <person name="Becker M.C."/>
            <person name="O'Laughlin M.D."/>
            <person name="Schaller M.E."/>
            <person name="Fewell G.A."/>
            <person name="Delehaunty K.D."/>
            <person name="Miner T.L."/>
            <person name="Nash W.E."/>
            <person name="Cordes M."/>
            <person name="Du H."/>
            <person name="Sun H."/>
            <person name="Edwards J."/>
            <person name="Bradshaw-Cordum H."/>
            <person name="Ali J."/>
            <person name="Andrews S."/>
            <person name="Isak A."/>
            <person name="Vanbrunt A."/>
            <person name="Nguyen C."/>
            <person name="Du F."/>
            <person name="Lamar B."/>
            <person name="Courtney L."/>
            <person name="Kalicki J."/>
            <person name="Ozersky P."/>
            <person name="Bielicki L."/>
            <person name="Scott K."/>
            <person name="Holmes A."/>
            <person name="Harkins R."/>
            <person name="Harris A."/>
            <person name="Strong C.M."/>
            <person name="Hou S."/>
            <person name="Tomlinson C."/>
            <person name="Dauphin-Kohlberg S."/>
            <person name="Kozlowicz-Reilly A."/>
            <person name="Leonard S."/>
            <person name="Rohlfing T."/>
            <person name="Rock S.M."/>
            <person name="Tin-Wollam A.-M."/>
            <person name="Abbott A."/>
            <person name="Minx P."/>
            <person name="Maupin R."/>
            <person name="Strowmatt C."/>
            <person name="Latreille P."/>
            <person name="Miller N."/>
            <person name="Johnson D."/>
            <person name="Murray J."/>
            <person name="Woessner J.P."/>
            <person name="Wendl M.C."/>
            <person name="Yang S.-P."/>
            <person name="Schultz B.R."/>
            <person name="Wallis J.W."/>
            <person name="Spieth J."/>
            <person name="Bieri T.A."/>
            <person name="Nelson J.O."/>
            <person name="Berkowicz N."/>
            <person name="Wohldmann P.E."/>
            <person name="Cook L.L."/>
            <person name="Hickenbotham M.T."/>
            <person name="Eldred J."/>
            <person name="Williams D."/>
            <person name="Bedell J.A."/>
            <person name="Mardis E.R."/>
            <person name="Clifton S.W."/>
            <person name="Chissoe S.L."/>
            <person name="Marra M.A."/>
            <person name="Raymond C."/>
            <person name="Haugen E."/>
            <person name="Gillett W."/>
            <person name="Zhou Y."/>
            <person name="James R."/>
            <person name="Phelps K."/>
            <person name="Iadanoto S."/>
            <person name="Bubb K."/>
            <person name="Simms E."/>
            <person name="Levy R."/>
            <person name="Clendenning J."/>
            <person name="Kaul R."/>
            <person name="Kent W.J."/>
            <person name="Furey T.S."/>
            <person name="Baertsch R.A."/>
            <person name="Brent M.R."/>
            <person name="Keibler E."/>
            <person name="Flicek P."/>
            <person name="Bork P."/>
            <person name="Suyama M."/>
            <person name="Bailey J.A."/>
            <person name="Portnoy M.E."/>
            <person name="Torrents D."/>
            <person name="Chinwalla A.T."/>
            <person name="Gish W.R."/>
            <person name="Eddy S.R."/>
            <person name="McPherson J.D."/>
            <person name="Olson M.V."/>
            <person name="Eichler E.E."/>
            <person name="Green E.D."/>
            <person name="Waterston R.H."/>
            <person name="Wilson R.K."/>
        </authorList>
    </citation>
    <scope>NUCLEOTIDE SEQUENCE [LARGE SCALE GENOMIC DNA]</scope>
</reference>
<reference key="4">
    <citation type="submission" date="2005-09" db="EMBL/GenBank/DDBJ databases">
        <authorList>
            <person name="Mural R.J."/>
            <person name="Istrail S."/>
            <person name="Sutton G.G."/>
            <person name="Florea L."/>
            <person name="Halpern A.L."/>
            <person name="Mobarry C.M."/>
            <person name="Lippert R."/>
            <person name="Walenz B."/>
            <person name="Shatkay H."/>
            <person name="Dew I."/>
            <person name="Miller J.R."/>
            <person name="Flanigan M.J."/>
            <person name="Edwards N.J."/>
            <person name="Bolanos R."/>
            <person name="Fasulo D."/>
            <person name="Halldorsson B.V."/>
            <person name="Hannenhalli S."/>
            <person name="Turner R."/>
            <person name="Yooseph S."/>
            <person name="Lu F."/>
            <person name="Nusskern D.R."/>
            <person name="Shue B.C."/>
            <person name="Zheng X.H."/>
            <person name="Zhong F."/>
            <person name="Delcher A.L."/>
            <person name="Huson D.H."/>
            <person name="Kravitz S.A."/>
            <person name="Mouchard L."/>
            <person name="Reinert K."/>
            <person name="Remington K.A."/>
            <person name="Clark A.G."/>
            <person name="Waterman M.S."/>
            <person name="Eichler E.E."/>
            <person name="Adams M.D."/>
            <person name="Hunkapiller M.W."/>
            <person name="Myers E.W."/>
            <person name="Venter J.C."/>
        </authorList>
    </citation>
    <scope>NUCLEOTIDE SEQUENCE [LARGE SCALE GENOMIC DNA]</scope>
</reference>
<reference key="5">
    <citation type="journal article" date="2004" name="Genome Res.">
        <title>The status, quality, and expansion of the NIH full-length cDNA project: the Mammalian Gene Collection (MGC).</title>
        <authorList>
            <consortium name="The MGC Project Team"/>
        </authorList>
    </citation>
    <scope>NUCLEOTIDE SEQUENCE [LARGE SCALE MRNA] (ISOFORM 1)</scope>
    <source>
        <tissue>Eye</tissue>
        <tissue>Placenta</tissue>
    </source>
</reference>
<reference key="6">
    <citation type="journal article" date="2000" name="DNA Res.">
        <title>Prediction of the coding sequences of unidentified human genes. XVI. The complete sequences of 150 new cDNA clones from brain which code for large proteins in vitro.</title>
        <authorList>
            <person name="Nagase T."/>
            <person name="Kikuno R."/>
            <person name="Ishikawa K."/>
            <person name="Hirosawa M."/>
            <person name="Ohara O."/>
        </authorList>
    </citation>
    <scope>NUCLEOTIDE SEQUENCE [LARGE SCALE MRNA] OF 43-1165 (ISOFORM 1)</scope>
    <source>
        <tissue>Brain</tissue>
    </source>
</reference>
<reference key="7">
    <citation type="journal article" date="2007" name="BMC Genomics">
        <title>The full-ORF clone resource of the German cDNA consortium.</title>
        <authorList>
            <person name="Bechtel S."/>
            <person name="Rosenfelder H."/>
            <person name="Duda A."/>
            <person name="Schmidt C.P."/>
            <person name="Ernst U."/>
            <person name="Wellenreuther R."/>
            <person name="Mehrle A."/>
            <person name="Schuster C."/>
            <person name="Bahr A."/>
            <person name="Bloecker H."/>
            <person name="Heubner D."/>
            <person name="Hoerlein A."/>
            <person name="Michel G."/>
            <person name="Wedler H."/>
            <person name="Koehrer K."/>
            <person name="Ottenwaelder B."/>
            <person name="Poustka A."/>
            <person name="Wiemann S."/>
            <person name="Schupp I."/>
        </authorList>
    </citation>
    <scope>NUCLEOTIDE SEQUENCE [LARGE SCALE MRNA] OF 418-1165 (ISOFORM 2)</scope>
    <source>
        <tissue>Testis</tissue>
    </source>
</reference>
<reference key="8">
    <citation type="journal article" date="2008" name="Proc. Natl. Acad. Sci. U.S.A.">
        <title>A quantitative atlas of mitotic phosphorylation.</title>
        <authorList>
            <person name="Dephoure N."/>
            <person name="Zhou C."/>
            <person name="Villen J."/>
            <person name="Beausoleil S.A."/>
            <person name="Bakalarski C.E."/>
            <person name="Elledge S.J."/>
            <person name="Gygi S.P."/>
        </authorList>
    </citation>
    <scope>PHOSPHORYLATION [LARGE SCALE ANALYSIS] AT SER-938 AND SER-949</scope>
    <scope>IDENTIFICATION BY MASS SPECTROMETRY [LARGE SCALE ANALYSIS]</scope>
    <source>
        <tissue>Cervix carcinoma</tissue>
    </source>
</reference>
<reference key="9">
    <citation type="journal article" date="2011" name="Cell Host Microbe">
        <title>A Tecpr1-dependent selective autophagy pathway targets bacterial pathogens.</title>
        <authorList>
            <person name="Ogawa M."/>
            <person name="Yoshikawa Y."/>
            <person name="Kobayashi T."/>
            <person name="Mimuro H."/>
            <person name="Fukumatsu M."/>
            <person name="Kiga K."/>
            <person name="Piao Z."/>
            <person name="Ashida H."/>
            <person name="Yoshida M."/>
            <person name="Kakuta S."/>
            <person name="Koyama T."/>
            <person name="Goto Y."/>
            <person name="Nagatake T."/>
            <person name="Nagai S."/>
            <person name="Kiyono H."/>
            <person name="Kawalec M."/>
            <person name="Reichhart J.M."/>
            <person name="Sasakawa C."/>
        </authorList>
    </citation>
    <scope>FUNCTION</scope>
    <scope>SUBCELLULAR LOCATION</scope>
    <scope>ASSOCIATION WITH THE ATG5-ATG12 CONJUGATE</scope>
    <scope>INTERACTION WITH ATG5 AND WIPI2</scope>
</reference>
<reference key="10">
    <citation type="journal article" date="2012" name="Mol. Cell">
        <title>A mammalian autophagosome maturation mechanism mediated by TECPR1 and the Atg12-Atg5 conjugate.</title>
        <authorList>
            <person name="Chen D."/>
            <person name="Fan W."/>
            <person name="Lu Y."/>
            <person name="Ding X."/>
            <person name="Chen S."/>
            <person name="Zhong Q."/>
        </authorList>
    </citation>
    <scope>FUNCTION</scope>
    <scope>SUBCELLULAR LOCATION</scope>
    <scope>ASSOCIATION WITH THE ATG5-ATG12 CONJUGATE</scope>
    <scope>INTERACTION WITH ATG5</scope>
    <scope>PTDINS(3)P-BINDING</scope>
</reference>
<reference key="11">
    <citation type="journal article" date="2013" name="J. Proteome Res.">
        <title>Toward a comprehensive characterization of a human cancer cell phosphoproteome.</title>
        <authorList>
            <person name="Zhou H."/>
            <person name="Di Palma S."/>
            <person name="Preisinger C."/>
            <person name="Peng M."/>
            <person name="Polat A.N."/>
            <person name="Heck A.J."/>
            <person name="Mohammed S."/>
        </authorList>
    </citation>
    <scope>IDENTIFICATION BY MASS SPECTROMETRY [LARGE SCALE ANALYSIS]</scope>
    <source>
        <tissue>Erythroleukemia</tissue>
    </source>
</reference>
<organism>
    <name type="scientific">Homo sapiens</name>
    <name type="common">Human</name>
    <dbReference type="NCBI Taxonomy" id="9606"/>
    <lineage>
        <taxon>Eukaryota</taxon>
        <taxon>Metazoa</taxon>
        <taxon>Chordata</taxon>
        <taxon>Craniata</taxon>
        <taxon>Vertebrata</taxon>
        <taxon>Euteleostomi</taxon>
        <taxon>Mammalia</taxon>
        <taxon>Eutheria</taxon>
        <taxon>Euarchontoglires</taxon>
        <taxon>Primates</taxon>
        <taxon>Haplorrhini</taxon>
        <taxon>Catarrhini</taxon>
        <taxon>Hominidae</taxon>
        <taxon>Homo</taxon>
    </lineage>
</organism>
<name>TCPR1_HUMAN</name>
<sequence length="1165" mass="129696">MPNSVLWAVDLFGRVYTLSTAGQYWEMCKDSQLEFKRVSATTQCCWGIACDNQVYVYVCASDVPIRRREEAYENQRWNPMGGFCEKLLLSDRWGWSDVSGLQHRPLDRVALPSPHWEWESDWYVDENFGGEPTEKGGWTYAIDFPATYTKDKKWNSCVRRRKWIRYRRYKSRDIWAKIPSKDDPKELPDPFNDLSVGGWEITEEPVGRLSVWAVSLQGKVWYREDVSHSNPEGSSWSLLDTPGEVVQISCGPHDLLWATLWEGQALVREGINRSNPKGSSWSIVEPPGSENGVMHISVGVSVVWAVTKDWKVWFRRGVNSHNPCGTSWIEMVGEMTMVNVGMNDQVWGIGCEDRAVYFRQGVTPSELSGKTWKAIIAARECDRSHSGSSSSLLSAGCFFGDEVRGSGESAPSDTDASSEVERPGPGQILPAEPLDDSKNATGNSASGLGAGRTAEDTVEDACPAEGSREARPNTHPGPAPTPAELPWTNIDLKEAKKVPSHSAAGFPETTSLSSLGLLPLGLEEPYGVDDHPLWAWVSGGGCVVEACAMPRWFTVQAGLSSSVHMLSLSITPAQTAAWRKQIFQQLTERTKRELENFRHYEQAVEQSVWVKTGALQWWCDWKPHKWVDVRLALEQFTGHDGVRDSILFIYYVVHEEKKYIHIFLNEVVALVPVLNETKHSFALYTPERTRQRWPVRLAAATEQDMNDWLALLSLSCCESRKVQGRPSPQAIWSITCKGDIFVSEPSPDLEAHEHPLPCDQMFWRQMGGHLRMVEANSRGVVWGIGYDHTAWVYTGGYGGGCFQGLASSTSNIYTQSDVKCVHIYENQRWNPVTGYTSRGLPTDRYMWSDASGLQECTKAGTKPPSLQWAWVSDWFVDFSVPGGTDQEGWQYASDFPASYHGSKTMKDFVRRRCWARKCKLVTSGPWLEVPPIALRDVSIIPESPGAEGSGHSIALWAVSDKGDVLCRLGVSELNPAGSSWLHVGTDQPFASISIGACYQVWAVARDGSAFYRGSVYPSQPAGDCWYHIPSPPRQRLKQVSAGQTSVYALDENGNLWYRQGITPSYPQGSSWEHVSNNVCRVSVGPLDQVWVIANKVQGSHSLSRGTVCHRTGVQPHEPKGHGWDYGIGGGWDHISVRANATRAPRSSSQEQEPSAPPEAHGPVCC</sequence>
<evidence type="ECO:0000250" key="1">
    <source>
        <dbReference type="UniProtKB" id="Q80VP0"/>
    </source>
</evidence>
<evidence type="ECO:0000256" key="2">
    <source>
        <dbReference type="SAM" id="MobiDB-lite"/>
    </source>
</evidence>
<evidence type="ECO:0000269" key="3">
    <source>
    </source>
</evidence>
<evidence type="ECO:0000269" key="4">
    <source>
    </source>
</evidence>
<evidence type="ECO:0000303" key="5">
    <source>
    </source>
</evidence>
<evidence type="ECO:0000303" key="6">
    <source>
    </source>
</evidence>
<evidence type="ECO:0000305" key="7"/>
<evidence type="ECO:0007744" key="8">
    <source>
    </source>
</evidence>
<evidence type="ECO:0007829" key="9">
    <source>
        <dbReference type="PDB" id="4TQ1"/>
    </source>
</evidence>